<feature type="signal peptide" evidence="2">
    <location>
        <begin position="1"/>
        <end position="21"/>
    </location>
</feature>
<feature type="propeptide" id="PRO_0000003805" evidence="2">
    <location>
        <begin position="22"/>
        <end position="60"/>
    </location>
</feature>
<feature type="chain" id="PRO_0000003806" description="Cadherin-15">
    <location>
        <begin position="61"/>
        <end position="814"/>
    </location>
</feature>
<feature type="topological domain" description="Extracellular" evidence="2">
    <location>
        <begin position="61"/>
        <end position="606"/>
    </location>
</feature>
<feature type="transmembrane region" description="Helical" evidence="2">
    <location>
        <begin position="607"/>
        <end position="626"/>
    </location>
</feature>
<feature type="topological domain" description="Cytoplasmic" evidence="2">
    <location>
        <begin position="627"/>
        <end position="814"/>
    </location>
</feature>
<feature type="domain" description="Cadherin 1" evidence="3">
    <location>
        <begin position="61"/>
        <end position="152"/>
    </location>
</feature>
<feature type="domain" description="Cadherin 2" evidence="3">
    <location>
        <begin position="153"/>
        <end position="260"/>
    </location>
</feature>
<feature type="domain" description="Cadherin 3" evidence="3">
    <location>
        <begin position="261"/>
        <end position="375"/>
    </location>
</feature>
<feature type="domain" description="Cadherin 4" evidence="3">
    <location>
        <begin position="376"/>
        <end position="481"/>
    </location>
</feature>
<feature type="domain" description="Cadherin 5" evidence="3">
    <location>
        <begin position="482"/>
        <end position="590"/>
    </location>
</feature>
<feature type="region of interest" description="Disordered" evidence="4">
    <location>
        <begin position="636"/>
        <end position="663"/>
    </location>
</feature>
<feature type="region of interest" description="Disordered" evidence="4">
    <location>
        <begin position="676"/>
        <end position="703"/>
    </location>
</feature>
<feature type="glycosylation site" description="N-linked (GlcNAc...) asparagine" evidence="2">
    <location>
        <position position="227"/>
    </location>
</feature>
<feature type="glycosylation site" description="N-linked (GlcNAc...) asparagine" evidence="2">
    <location>
        <position position="531"/>
    </location>
</feature>
<feature type="glycosylation site" description="N-linked (GlcNAc...) asparagine" evidence="2">
    <location>
        <position position="538"/>
    </location>
</feature>
<feature type="glycosylation site" description="N-linked (GlcNAc...) asparagine" evidence="2">
    <location>
        <position position="576"/>
    </location>
</feature>
<feature type="sequence variant" id="VAR_054966" description="In MRD3; uncertain significance; dbSNP:rs567903921." evidence="5">
    <original>V</original>
    <variation>L</variation>
    <location>
        <position position="8"/>
    </location>
</feature>
<feature type="sequence variant" id="VAR_054967" description="In MRD3; affects cell-cell adhesion but not surface expression of the protein; dbSNP:rs121434539." evidence="5">
    <original>R</original>
    <variation>C</variation>
    <location>
        <position position="60"/>
    </location>
</feature>
<feature type="sequence variant" id="VAR_054968" description="In MRD3; affects cell-cell adhesion but not surface expression of the protein; dbSNP:rs121434540." evidence="5">
    <original>R</original>
    <variation>W</variation>
    <location>
        <position position="92"/>
    </location>
</feature>
<feature type="sequence variant" id="VAR_054969" description="In MRD3; affects cell-cell adhesion but not surface expression of the protein; dbSNP:rs121434541." evidence="5">
    <original>A</original>
    <variation>V</variation>
    <location>
        <position position="122"/>
    </location>
</feature>
<feature type="mutagenesis site" description="No effect on cell-cell adhesion." evidence="5">
    <original>K</original>
    <variation>R</variation>
    <location>
        <position position="103"/>
    </location>
</feature>
<feature type="mutagenesis site" description="No effect on cell-cell adhesion." evidence="5">
    <original>M</original>
    <variation>T</variation>
    <location>
        <position position="109"/>
    </location>
</feature>
<keyword id="KW-0106">Calcium</keyword>
<keyword id="KW-0130">Cell adhesion</keyword>
<keyword id="KW-1003">Cell membrane</keyword>
<keyword id="KW-0160">Chromosomal rearrangement</keyword>
<keyword id="KW-0165">Cleavage on pair of basic residues</keyword>
<keyword id="KW-0225">Disease variant</keyword>
<keyword id="KW-0325">Glycoprotein</keyword>
<keyword id="KW-0991">Intellectual disability</keyword>
<keyword id="KW-0472">Membrane</keyword>
<keyword id="KW-0479">Metal-binding</keyword>
<keyword id="KW-1267">Proteomics identification</keyword>
<keyword id="KW-1185">Reference proteome</keyword>
<keyword id="KW-0677">Repeat</keyword>
<keyword id="KW-0732">Signal</keyword>
<keyword id="KW-0812">Transmembrane</keyword>
<keyword id="KW-1133">Transmembrane helix</keyword>
<proteinExistence type="evidence at protein level"/>
<accession>P55291</accession>
<evidence type="ECO:0000250" key="1"/>
<evidence type="ECO:0000255" key="2"/>
<evidence type="ECO:0000255" key="3">
    <source>
        <dbReference type="PROSITE-ProRule" id="PRU00043"/>
    </source>
</evidence>
<evidence type="ECO:0000256" key="4">
    <source>
        <dbReference type="SAM" id="MobiDB-lite"/>
    </source>
</evidence>
<evidence type="ECO:0000269" key="5">
    <source>
    </source>
</evidence>
<protein>
    <recommendedName>
        <fullName>Cadherin-15</fullName>
    </recommendedName>
    <alternativeName>
        <fullName>Cadherin-14</fullName>
    </alternativeName>
    <alternativeName>
        <fullName>Muscle cadherin</fullName>
        <shortName>M-cadherin</shortName>
    </alternativeName>
</protein>
<gene>
    <name type="primary">CDH15</name>
    <name type="synonym">CDH14</name>
    <name type="synonym">CDH3</name>
</gene>
<organism>
    <name type="scientific">Homo sapiens</name>
    <name type="common">Human</name>
    <dbReference type="NCBI Taxonomy" id="9606"/>
    <lineage>
        <taxon>Eukaryota</taxon>
        <taxon>Metazoa</taxon>
        <taxon>Chordata</taxon>
        <taxon>Craniata</taxon>
        <taxon>Vertebrata</taxon>
        <taxon>Euteleostomi</taxon>
        <taxon>Mammalia</taxon>
        <taxon>Eutheria</taxon>
        <taxon>Euarchontoglires</taxon>
        <taxon>Primates</taxon>
        <taxon>Haplorrhini</taxon>
        <taxon>Catarrhini</taxon>
        <taxon>Hominidae</taxon>
        <taxon>Homo</taxon>
    </lineage>
</organism>
<comment type="function">
    <text>Cadherins are calcium-dependent cell adhesion proteins. They preferentially interact with themselves in a homophilic manner in connecting cells; cadherins may thus contribute to the sorting of heterogeneous cell types. M-cadherin is part of the myogenic program and may provide a trigger for terminal muscle differentiation.</text>
</comment>
<comment type="interaction">
    <interactant intactId="EBI-10215061">
        <id>P55291</id>
    </interactant>
    <interactant intactId="EBI-347996">
        <id>O43765</id>
        <label>SGTA</label>
    </interactant>
    <organismsDiffer>false</organismsDiffer>
    <experiments>8</experiments>
</comment>
<comment type="interaction">
    <interactant intactId="EBI-10215061">
        <id>P55291</id>
    </interactant>
    <interactant intactId="EBI-744081">
        <id>Q96EQ0</id>
        <label>SGTB</label>
    </interactant>
    <organismsDiffer>false</organismsDiffer>
    <experiments>3</experiments>
</comment>
<comment type="interaction">
    <interactant intactId="EBI-10215061">
        <id>P55291</id>
    </interactant>
    <interactant intactId="EBI-947187">
        <id>Q9UHD9</id>
        <label>UBQLN2</label>
    </interactant>
    <organismsDiffer>false</organismsDiffer>
    <experiments>3</experiments>
</comment>
<comment type="subcellular location">
    <subcellularLocation>
        <location>Cell membrane</location>
        <topology>Single-pass type I membrane protein</topology>
    </subcellularLocation>
</comment>
<comment type="tissue specificity">
    <text evidence="5">Expressed in the brain and cerebellum.</text>
</comment>
<comment type="domain">
    <text evidence="1">Three calcium ions are usually bound at the interface of each cadherin domain and rigidify the connections, imparting a strong curvature to the full-length ectodomain.</text>
</comment>
<comment type="disease">
    <text>A chromosomal aberration involving CDH15 and KIRREL3 is found in a patient with severe intellectual disability and dysmorphic facial features. Translocation t(11;16)(q24.2;q24).</text>
</comment>
<comment type="disease" evidence="5">
    <disease id="DI-00711">
        <name>Intellectual developmental disorder, autosomal dominant 3</name>
        <acronym>MRD3</acronym>
        <description>A disorder characterized by significantly below average general intellectual functioning associated with impairments in adaptive behavior and manifested during the developmental period.</description>
        <dbReference type="MIM" id="612580"/>
    </disease>
    <text>The disease is caused by variants affecting the gene represented in this entry.</text>
</comment>
<reference key="1">
    <citation type="journal article" date="1997" name="J. Biol. Chem.">
        <title>Identification of human cadherin-14, a novel neurally specific type II cadherin, by protein interaction cloning.</title>
        <authorList>
            <person name="Shibata T."/>
            <person name="Shimoyama Y."/>
            <person name="Gotoh M."/>
            <person name="Hirohashi S."/>
        </authorList>
    </citation>
    <scope>NUCLEOTIDE SEQUENCE [MRNA]</scope>
    <source>
        <tissue>Skeletal muscle</tissue>
    </source>
</reference>
<reference key="2">
    <citation type="journal article" date="2004" name="Genome Res.">
        <title>The status, quality, and expansion of the NIH full-length cDNA project: the Mammalian Gene Collection (MGC).</title>
        <authorList>
            <consortium name="The MGC Project Team"/>
        </authorList>
    </citation>
    <scope>NUCLEOTIDE SEQUENCE [LARGE SCALE MRNA]</scope>
    <source>
        <tissue>Muscle</tissue>
    </source>
</reference>
<reference key="3">
    <citation type="journal article" date="2008" name="Am. J. Hum. Genet.">
        <title>Alterations in CDH15 and KIRREL3 in patients with mild to severe intellectual disability.</title>
        <authorList>
            <person name="Bhalla K."/>
            <person name="Luo Y."/>
            <person name="Buchan T."/>
            <person name="Beachem M.A."/>
            <person name="Guzauskas G.F."/>
            <person name="Ladd S."/>
            <person name="Bratcher S.J."/>
            <person name="Schroer R.J."/>
            <person name="Balsamo J."/>
            <person name="DuPont B.R."/>
            <person name="Lilien J."/>
            <person name="Srivastava A.K."/>
        </authorList>
    </citation>
    <scope>TISSUE SPECIFICITY</scope>
    <scope>CHROMOSOMAL TRANSLOCATION WITH KIRREL3</scope>
    <scope>VARIANTS MRD3 LEU-8; CYS-60; TRP-92 AND VAL-122</scope>
    <scope>MUTAGENESIS OF LYS-103 AND MET-109</scope>
    <scope>CHARACTERIZATION OF VARIANTS MRD3 CYS-60; TRP-92 AND VAL-122</scope>
</reference>
<dbReference type="EMBL" id="D83542">
    <property type="protein sequence ID" value="BAA12012.1"/>
    <property type="molecule type" value="mRNA"/>
</dbReference>
<dbReference type="EMBL" id="BC008951">
    <property type="protein sequence ID" value="AAH08951.1"/>
    <property type="molecule type" value="mRNA"/>
</dbReference>
<dbReference type="CCDS" id="CCDS10976.1"/>
<dbReference type="PIR" id="G02878">
    <property type="entry name" value="G02878"/>
</dbReference>
<dbReference type="RefSeq" id="NP_004924.1">
    <property type="nucleotide sequence ID" value="NM_004933.3"/>
</dbReference>
<dbReference type="SMR" id="P55291"/>
<dbReference type="BioGRID" id="107448">
    <property type="interactions" value="15"/>
</dbReference>
<dbReference type="FunCoup" id="P55291">
    <property type="interactions" value="220"/>
</dbReference>
<dbReference type="IntAct" id="P55291">
    <property type="interactions" value="5"/>
</dbReference>
<dbReference type="MINT" id="P55291"/>
<dbReference type="STRING" id="9606.ENSP00000289746"/>
<dbReference type="GlyCosmos" id="P55291">
    <property type="glycosylation" value="4 sites, No reported glycans"/>
</dbReference>
<dbReference type="GlyGen" id="P55291">
    <property type="glycosylation" value="5 sites"/>
</dbReference>
<dbReference type="iPTMnet" id="P55291"/>
<dbReference type="PhosphoSitePlus" id="P55291"/>
<dbReference type="BioMuta" id="CDH15"/>
<dbReference type="DMDM" id="1705553"/>
<dbReference type="jPOST" id="P55291"/>
<dbReference type="MassIVE" id="P55291"/>
<dbReference type="PaxDb" id="9606-ENSP00000289746"/>
<dbReference type="PeptideAtlas" id="P55291"/>
<dbReference type="ProteomicsDB" id="56843"/>
<dbReference type="Antibodypedia" id="2417">
    <property type="antibodies" value="316 antibodies from 36 providers"/>
</dbReference>
<dbReference type="DNASU" id="1013"/>
<dbReference type="Ensembl" id="ENST00000289746.3">
    <property type="protein sequence ID" value="ENSP00000289746.2"/>
    <property type="gene ID" value="ENSG00000129910.8"/>
</dbReference>
<dbReference type="GeneID" id="1013"/>
<dbReference type="KEGG" id="hsa:1013"/>
<dbReference type="MANE-Select" id="ENST00000289746.3">
    <property type="protein sequence ID" value="ENSP00000289746.2"/>
    <property type="RefSeq nucleotide sequence ID" value="NM_004933.3"/>
    <property type="RefSeq protein sequence ID" value="NP_004924.1"/>
</dbReference>
<dbReference type="UCSC" id="uc002fmt.4">
    <property type="organism name" value="human"/>
</dbReference>
<dbReference type="AGR" id="HGNC:1754"/>
<dbReference type="CTD" id="1013"/>
<dbReference type="DisGeNET" id="1013"/>
<dbReference type="GeneCards" id="CDH15"/>
<dbReference type="HGNC" id="HGNC:1754">
    <property type="gene designation" value="CDH15"/>
</dbReference>
<dbReference type="HPA" id="ENSG00000129910">
    <property type="expression patterns" value="Group enriched (brain, skeletal muscle)"/>
</dbReference>
<dbReference type="MalaCards" id="CDH15"/>
<dbReference type="MIM" id="114019">
    <property type="type" value="gene"/>
</dbReference>
<dbReference type="MIM" id="612580">
    <property type="type" value="phenotype"/>
</dbReference>
<dbReference type="neXtProt" id="NX_P55291"/>
<dbReference type="OpenTargets" id="ENSG00000129910"/>
<dbReference type="Orphanet" id="178469">
    <property type="disease" value="Autosomal dominant non-syndromic intellectual disability"/>
</dbReference>
<dbReference type="PharmGKB" id="PA26288"/>
<dbReference type="VEuPathDB" id="HostDB:ENSG00000129910"/>
<dbReference type="eggNOG" id="KOG3594">
    <property type="taxonomic scope" value="Eukaryota"/>
</dbReference>
<dbReference type="GeneTree" id="ENSGT00940000160118"/>
<dbReference type="HOGENOM" id="CLU_005284_2_0_1"/>
<dbReference type="InParanoid" id="P55291"/>
<dbReference type="OMA" id="NACGRRH"/>
<dbReference type="OrthoDB" id="6079678at2759"/>
<dbReference type="PAN-GO" id="P55291">
    <property type="GO annotations" value="4 GO annotations based on evolutionary models"/>
</dbReference>
<dbReference type="PhylomeDB" id="P55291"/>
<dbReference type="TreeFam" id="TF316817"/>
<dbReference type="PathwayCommons" id="P55291"/>
<dbReference type="Reactome" id="R-HSA-418990">
    <property type="pathway name" value="Adherens junctions interactions"/>
</dbReference>
<dbReference type="Reactome" id="R-HSA-525793">
    <property type="pathway name" value="Myogenesis"/>
</dbReference>
<dbReference type="SignaLink" id="P55291"/>
<dbReference type="SIGNOR" id="P55291"/>
<dbReference type="BioGRID-ORCS" id="1013">
    <property type="hits" value="29 hits in 1145 CRISPR screens"/>
</dbReference>
<dbReference type="GeneWiki" id="CDH15"/>
<dbReference type="GenomeRNAi" id="1013"/>
<dbReference type="Pharos" id="P55291">
    <property type="development level" value="Tbio"/>
</dbReference>
<dbReference type="PRO" id="PR:P55291"/>
<dbReference type="Proteomes" id="UP000005640">
    <property type="component" value="Chromosome 16"/>
</dbReference>
<dbReference type="RNAct" id="P55291">
    <property type="molecule type" value="protein"/>
</dbReference>
<dbReference type="Bgee" id="ENSG00000129910">
    <property type="expression patterns" value="Expressed in cerebellar hemisphere and 111 other cell types or tissues"/>
</dbReference>
<dbReference type="GO" id="GO:0005912">
    <property type="term" value="C:adherens junction"/>
    <property type="evidence" value="ECO:0000318"/>
    <property type="project" value="GO_Central"/>
</dbReference>
<dbReference type="GO" id="GO:0016342">
    <property type="term" value="C:catenin complex"/>
    <property type="evidence" value="ECO:0000318"/>
    <property type="project" value="GO_Central"/>
</dbReference>
<dbReference type="GO" id="GO:0005901">
    <property type="term" value="C:caveola"/>
    <property type="evidence" value="ECO:0007669"/>
    <property type="project" value="Ensembl"/>
</dbReference>
<dbReference type="GO" id="GO:0070062">
    <property type="term" value="C:extracellular exosome"/>
    <property type="evidence" value="ECO:0007005"/>
    <property type="project" value="UniProtKB"/>
</dbReference>
<dbReference type="GO" id="GO:0005794">
    <property type="term" value="C:Golgi apparatus"/>
    <property type="evidence" value="ECO:0000314"/>
    <property type="project" value="HPA"/>
</dbReference>
<dbReference type="GO" id="GO:0031594">
    <property type="term" value="C:neuromuscular junction"/>
    <property type="evidence" value="ECO:0007669"/>
    <property type="project" value="Ensembl"/>
</dbReference>
<dbReference type="GO" id="GO:0005886">
    <property type="term" value="C:plasma membrane"/>
    <property type="evidence" value="ECO:0000314"/>
    <property type="project" value="HPA"/>
</dbReference>
<dbReference type="GO" id="GO:0008013">
    <property type="term" value="F:beta-catenin binding"/>
    <property type="evidence" value="ECO:0000318"/>
    <property type="project" value="GO_Central"/>
</dbReference>
<dbReference type="GO" id="GO:0045296">
    <property type="term" value="F:cadherin binding"/>
    <property type="evidence" value="ECO:0000318"/>
    <property type="project" value="GO_Central"/>
</dbReference>
<dbReference type="GO" id="GO:0005509">
    <property type="term" value="F:calcium ion binding"/>
    <property type="evidence" value="ECO:0007669"/>
    <property type="project" value="InterPro"/>
</dbReference>
<dbReference type="GO" id="GO:0034332">
    <property type="term" value="P:adherens junction organization"/>
    <property type="evidence" value="ECO:0000318"/>
    <property type="project" value="GO_Central"/>
</dbReference>
<dbReference type="GO" id="GO:0016339">
    <property type="term" value="P:calcium-dependent cell-cell adhesion via plasma membrane cell adhesion molecules"/>
    <property type="evidence" value="ECO:0000318"/>
    <property type="project" value="GO_Central"/>
</dbReference>
<dbReference type="GO" id="GO:0007155">
    <property type="term" value="P:cell adhesion"/>
    <property type="evidence" value="ECO:0000304"/>
    <property type="project" value="ProtInc"/>
</dbReference>
<dbReference type="GO" id="GO:0016477">
    <property type="term" value="P:cell migration"/>
    <property type="evidence" value="ECO:0000318"/>
    <property type="project" value="GO_Central"/>
</dbReference>
<dbReference type="GO" id="GO:0000902">
    <property type="term" value="P:cell morphogenesis"/>
    <property type="evidence" value="ECO:0000318"/>
    <property type="project" value="GO_Central"/>
</dbReference>
<dbReference type="GO" id="GO:0044331">
    <property type="term" value="P:cell-cell adhesion mediated by cadherin"/>
    <property type="evidence" value="ECO:0000318"/>
    <property type="project" value="GO_Central"/>
</dbReference>
<dbReference type="GO" id="GO:0007043">
    <property type="term" value="P:cell-cell junction assembly"/>
    <property type="evidence" value="ECO:0000318"/>
    <property type="project" value="GO_Central"/>
</dbReference>
<dbReference type="GO" id="GO:0007156">
    <property type="term" value="P:homophilic cell adhesion via plasma membrane adhesion molecules"/>
    <property type="evidence" value="ECO:0007669"/>
    <property type="project" value="InterPro"/>
</dbReference>
<dbReference type="CDD" id="cd11304">
    <property type="entry name" value="Cadherin_repeat"/>
    <property type="match status" value="4"/>
</dbReference>
<dbReference type="FunFam" id="2.60.40.60:FF:000011">
    <property type="entry name" value="Cadherin 1"/>
    <property type="match status" value="1"/>
</dbReference>
<dbReference type="FunFam" id="2.60.40.60:FF:000229">
    <property type="entry name" value="Cadherin 15"/>
    <property type="match status" value="1"/>
</dbReference>
<dbReference type="FunFam" id="2.60.40.60:FF:000019">
    <property type="entry name" value="Cadherin 2"/>
    <property type="match status" value="1"/>
</dbReference>
<dbReference type="FunFam" id="2.60.40.60:FF:000022">
    <property type="entry name" value="Cadherin 2"/>
    <property type="match status" value="1"/>
</dbReference>
<dbReference type="FunFam" id="4.10.900.10:FF:000001">
    <property type="entry name" value="Cadherin 2"/>
    <property type="match status" value="1"/>
</dbReference>
<dbReference type="FunFam" id="2.60.40.60:FF:000074">
    <property type="entry name" value="Desmoglein 4"/>
    <property type="match status" value="1"/>
</dbReference>
<dbReference type="Gene3D" id="2.60.40.60">
    <property type="entry name" value="Cadherins"/>
    <property type="match status" value="5"/>
</dbReference>
<dbReference type="Gene3D" id="4.10.900.10">
    <property type="entry name" value="TCF3-CBD (Catenin binding domain)"/>
    <property type="match status" value="1"/>
</dbReference>
<dbReference type="InterPro" id="IPR039808">
    <property type="entry name" value="Cadherin"/>
</dbReference>
<dbReference type="InterPro" id="IPR002126">
    <property type="entry name" value="Cadherin-like_dom"/>
</dbReference>
<dbReference type="InterPro" id="IPR015919">
    <property type="entry name" value="Cadherin-like_sf"/>
</dbReference>
<dbReference type="InterPro" id="IPR020894">
    <property type="entry name" value="Cadherin_CS"/>
</dbReference>
<dbReference type="InterPro" id="IPR000233">
    <property type="entry name" value="Cadherin_Y-type_LIR"/>
</dbReference>
<dbReference type="InterPro" id="IPR027397">
    <property type="entry name" value="Catenin-bd_sf"/>
</dbReference>
<dbReference type="PANTHER" id="PTHR24027:SF300">
    <property type="entry name" value="CADHERIN-15"/>
    <property type="match status" value="1"/>
</dbReference>
<dbReference type="PANTHER" id="PTHR24027">
    <property type="entry name" value="CADHERIN-23"/>
    <property type="match status" value="1"/>
</dbReference>
<dbReference type="Pfam" id="PF01049">
    <property type="entry name" value="CADH_Y-type_LIR"/>
    <property type="match status" value="1"/>
</dbReference>
<dbReference type="Pfam" id="PF00028">
    <property type="entry name" value="Cadherin"/>
    <property type="match status" value="4"/>
</dbReference>
<dbReference type="PRINTS" id="PR00205">
    <property type="entry name" value="CADHERIN"/>
</dbReference>
<dbReference type="SMART" id="SM00112">
    <property type="entry name" value="CA"/>
    <property type="match status" value="4"/>
</dbReference>
<dbReference type="SUPFAM" id="SSF49313">
    <property type="entry name" value="Cadherin-like"/>
    <property type="match status" value="5"/>
</dbReference>
<dbReference type="PROSITE" id="PS00232">
    <property type="entry name" value="CADHERIN_1"/>
    <property type="match status" value="2"/>
</dbReference>
<dbReference type="PROSITE" id="PS50268">
    <property type="entry name" value="CADHERIN_2"/>
    <property type="match status" value="5"/>
</dbReference>
<name>CAD15_HUMAN</name>
<sequence length="814" mass="88916">MDAAFLLVLGLLAQSLCLSLGVPGWRRPTTLYPWRRAPALSRVRRAWVIPPISVSENHKRLPYPLVQIKSDKQQLGSVIYSIQGPGVDEEPRGVFSIDKFTGKVFLNAMLDREKTDRFRLRAFALDLGGSTLEDPTDLEIVVVDQNDNRPAFLQEAFTGRVLEGAVPGTYVTRAEATDADDPETDNAALRFSILQQGSPELFSIDELTGEIRTVQVGLDREVVAVYNLTLQVADMSGDGLTATASAIITLDDINDNAPEFTRDEFFMEAIEAVSGVDVGRLEVEDRDLPGSPNWVARFTILEGDPDGQFTIRTDPKTNEGVLSIVKALDYESCEHYELKVSVQNEAPLQAAALRAERGQAKVRVHVQDTNEPPVFQENPLRTSLAEGAPPGTLVATFSARDPDTEQLQRLSYSKDYDPEDWLQVDAATGRIQTQHVLSPASPFLKGGWYRAIVLAQDDASQPRTATGTLSIEILEVNDHAPVLAPPPPGSLCSEPHQGPGLLLGATDEDLPPHGAPFHFQLSPRLPELGRNWSLSQVNVSHARLRPRHQVPEGLHRLSLLLRDSGQPPQQREQPLNVTVCRCGKDGVCLPGAAALLAGGTGLSLGALVIVLASALLLLVLVLLVALRARFWKQSRGKGLLHGPQDDLRDNVLNYDEQGGGEEDQDAYDISQLRHPTALSLPLGPPPLRRDAPQGRLHPQPPRVLPTSPLDIADFINDGLEAADSDPSVPPYDTALIYDYEGDGSVAGTLSSILSSQGDEDQDYDYLRDWGPRFARLADMYGHPCGLEYGARWDHQAREGLSPGALLPRHRGRTA</sequence>